<gene>
    <name evidence="16" type="primary">ccoP</name>
    <name type="ordered locus">RHOS4_23010</name>
    <name type="ORF">RSP_0693</name>
</gene>
<sequence>MSVKPTKQKPGEPPTTGHSWDGIEEFDNPMPRWWLWTFYVTIVWAIGYSILYPAWPLINGATNGLIGHSTRADVQRDIEAFAEANATIRQQLVNTDLTAIAADPNLLQYATNAGAAVFRTNCVQCHGSGAAGNVGYPNLLDDDWLWGGDIESIHTTVTHGIRNTTDDEARYSEMPRFGADGLLDSTQISQVVEYVLQISGQDHDAALSAEGATIFADNCAACHGEDGTGSRDVGAPNLTDAIWLYGGDRATVTETVTYARFGVMPNWNARLTEADIRSVAVYVHGLGGGE</sequence>
<feature type="chain" id="PRO_0000412293" description="Cbb3-type cytochrome c oxidase subunit CcoP">
    <location>
        <begin position="1"/>
        <end position="290"/>
    </location>
</feature>
<feature type="topological domain" description="Cytoplasmic" evidence="5 12">
    <location>
        <begin position="1"/>
        <end position="37"/>
    </location>
</feature>
<feature type="transmembrane region" description="Helical" evidence="5">
    <location>
        <begin position="38"/>
        <end position="58"/>
    </location>
</feature>
<feature type="topological domain" description="Periplasmic" evidence="5 12">
    <location>
        <begin position="59"/>
        <end position="290"/>
    </location>
</feature>
<feature type="domain" description="Cytochrome c 1" evidence="6">
    <location>
        <begin position="109"/>
        <end position="199"/>
    </location>
</feature>
<feature type="domain" description="Cytochrome c 2" evidence="6">
    <location>
        <begin position="206"/>
        <end position="287"/>
    </location>
</feature>
<feature type="region of interest" description="Disordered" evidence="7">
    <location>
        <begin position="1"/>
        <end position="22"/>
    </location>
</feature>
<feature type="binding site" description="covalent" evidence="2">
    <location>
        <position position="122"/>
    </location>
    <ligand>
        <name>heme c</name>
        <dbReference type="ChEBI" id="CHEBI:61717"/>
        <label>1</label>
    </ligand>
</feature>
<feature type="binding site" description="covalent" evidence="2">
    <location>
        <position position="125"/>
    </location>
    <ligand>
        <name>heme c</name>
        <dbReference type="ChEBI" id="CHEBI:61717"/>
        <label>1</label>
    </ligand>
</feature>
<feature type="binding site" description="axial binding residue" evidence="2">
    <location>
        <position position="126"/>
    </location>
    <ligand>
        <name>heme c</name>
        <dbReference type="ChEBI" id="CHEBI:61717"/>
        <label>1</label>
    </ligand>
    <ligandPart>
        <name>Fe</name>
        <dbReference type="ChEBI" id="CHEBI:18248"/>
    </ligandPart>
</feature>
<feature type="binding site" description="axial binding residue" evidence="2">
    <location>
        <position position="174"/>
    </location>
    <ligand>
        <name>heme c</name>
        <dbReference type="ChEBI" id="CHEBI:61717"/>
        <label>2</label>
    </ligand>
    <ligandPart>
        <name>Fe</name>
        <dbReference type="ChEBI" id="CHEBI:18248"/>
    </ligandPart>
</feature>
<feature type="binding site" description="covalent" evidence="2">
    <location>
        <position position="219"/>
    </location>
    <ligand>
        <name>heme c</name>
        <dbReference type="ChEBI" id="CHEBI:61717"/>
        <label>2</label>
    </ligand>
</feature>
<feature type="binding site" description="covalent" evidence="2">
    <location>
        <position position="222"/>
    </location>
    <ligand>
        <name>heme c</name>
        <dbReference type="ChEBI" id="CHEBI:61717"/>
        <label>2</label>
    </ligand>
</feature>
<feature type="binding site" description="axial binding residue" evidence="2">
    <location>
        <position position="223"/>
    </location>
    <ligand>
        <name>heme c</name>
        <dbReference type="ChEBI" id="CHEBI:61717"/>
        <label>2</label>
    </ligand>
    <ligandPart>
        <name>Fe</name>
        <dbReference type="ChEBI" id="CHEBI:18248"/>
    </ligandPart>
</feature>
<feature type="binding site" description="axial binding residue" evidence="2">
    <location>
        <position position="264"/>
    </location>
    <ligand>
        <name>heme c</name>
        <dbReference type="ChEBI" id="CHEBI:61717"/>
        <label>1</label>
    </ligand>
    <ligandPart>
        <name>Fe</name>
        <dbReference type="ChEBI" id="CHEBI:18248"/>
    </ligandPart>
</feature>
<feature type="sequence conflict" description="In Ref. 3; AAC44983." evidence="13" ref="3">
    <original>D</original>
    <variation>E</variation>
    <location>
        <position position="166"/>
    </location>
</feature>
<reference evidence="13 14" key="1">
    <citation type="journal article" date="1998" name="Biochim. Biophys. Acta">
        <title>The cbb3-type cytochrome c oxidase from Rhodobacter sphaeroides, a proton-pumping heme-copper oxidase.</title>
        <authorList>
            <person name="Toledo-Cuevas M."/>
            <person name="Barquera B."/>
            <person name="Gennis R.B."/>
            <person name="Wikstrom M."/>
            <person name="Garcia-Horsman J.A."/>
        </authorList>
    </citation>
    <scope>NUCLEOTIDE SEQUENCE [GENOMIC DNA]</scope>
    <scope>FUNCTION</scope>
    <scope>CATALYTIC ACTIVITY OF THE CYTOCHROME C OXIDASE COMPLEX</scope>
    <scope>SUBCELLULAR LOCATION</scope>
    <source>
        <strain evidence="14">ATCC 17023 / DSM 158 / JCM 6121 / CCUG 31486 / LMG 2827 / NBRC 12203 / NCIMB 8253 / ATH 2.4.1.</strain>
    </source>
</reference>
<reference key="2">
    <citation type="submission" date="2005-09" db="EMBL/GenBank/DDBJ databases">
        <title>Complete sequence of chromosome 1 of Rhodobacter sphaeroides 2.4.1.</title>
        <authorList>
            <person name="Copeland A."/>
            <person name="Lucas S."/>
            <person name="Lapidus A."/>
            <person name="Barry K."/>
            <person name="Detter J.C."/>
            <person name="Glavina T."/>
            <person name="Hammon N."/>
            <person name="Israni S."/>
            <person name="Pitluck S."/>
            <person name="Richardson P."/>
            <person name="Mackenzie C."/>
            <person name="Choudhary M."/>
            <person name="Larimer F."/>
            <person name="Hauser L.J."/>
            <person name="Land M."/>
            <person name="Donohue T.J."/>
            <person name="Kaplan S."/>
        </authorList>
    </citation>
    <scope>NUCLEOTIDE SEQUENCE [LARGE SCALE GENOMIC DNA]</scope>
    <source>
        <strain evidence="16">ATCC 17023 / DSM 158 / JCM 6121 / CCUG 31486 / LMG 2827 / NBRC 12203 / NCIMB 8253 / ATH 2.4.1.</strain>
    </source>
</reference>
<reference evidence="13 15" key="3">
    <citation type="journal article" date="1997" name="J. Bacteriol.">
        <title>Evidence for the role of redox carriers in photosynthesis gene expression and carotenoid biosynthesis in Rhodobacter sphaeroides 2.4.1.</title>
        <authorList>
            <person name="O'Gara J.P."/>
            <person name="Kaplan S."/>
        </authorList>
    </citation>
    <scope>NUCLEOTIDE SEQUENCE [GENOMIC DNA] OF 148-290</scope>
    <scope>DISRUPTION PHENOTYPE</scope>
    <source>
        <strain evidence="15">ATCC 17023 / DSM 158 / JCM 6121 / CCUG 31486 / LMG 2827 / NBRC 12203 / NCIMB 8253 / ATH 2.4.1.</strain>
    </source>
</reference>
<reference evidence="13 15" key="4">
    <citation type="journal article" date="2000" name="J. Bacteriol.">
        <title>Genetic and phenotypic analyses of the rdx locus of Rhodobacter sphaeroides 2.4.1.</title>
        <authorList>
            <person name="Roh J.H."/>
            <person name="Kaplan S."/>
        </authorList>
    </citation>
    <scope>NUCLEOTIDE SEQUENCE [GENOMIC DNA] OF 148-290</scope>
    <scope>CATALYTIC ACTIVITY OF THE CYTOCHROME C OXIDASE COMPLEX</scope>
    <source>
        <strain evidence="15">ATCC 17023 / DSM 158 / JCM 6121 / CCUG 31486 / LMG 2827 / NBRC 12203 / NCIMB 8253 / ATH 2.4.1.</strain>
    </source>
</reference>
<reference evidence="13" key="5">
    <citation type="journal article" date="1999" name="Biochemistry">
        <title>The cbb3 terminal oxidase of Rhodobacter sphaeroides 2.4.1: structural and functional implications for the regulation of spectral complex formation.</title>
        <authorList>
            <person name="Oh J.I."/>
            <person name="Kaplan S."/>
        </authorList>
    </citation>
    <scope>CATALYTIC ACTIVITY OF THE CYTOCHROME C OXIDASE COMPLEX</scope>
    <scope>DISRUPTION PHENOTYPE</scope>
    <source>
        <strain evidence="8">ATCC 17023 / DSM 158 / JCM 6121 / CCUG 31486 / LMG 2827 / NBRC 12203 / NCIMB 8253 / ATH 2.4.1.</strain>
    </source>
</reference>
<reference evidence="13" key="6">
    <citation type="journal article" date="2002" name="J. Biol. Chem.">
        <title>Oxygen adaptation. The role of the CcoQ subunit of the cbb3 cytochrome c oxidase of Rhodobacter sphaeroides 2.4.1.</title>
        <authorList>
            <person name="Oh J.I."/>
            <person name="Kaplan S."/>
        </authorList>
    </citation>
    <scope>FUNCTION</scope>
    <scope>CATALYTIC ACTIVITY OF THE CYTOCHROME C OXIDASE COMPLEX</scope>
    <scope>COFACTOR</scope>
    <scope>SUBUNIT</scope>
    <source>
        <strain evidence="9">ATCC 17023 / DSM 158 / JCM 6121 / CCUG 31486 / LMG 2827 / NBRC 12203 / NCIMB 8253 / ATH 2.4.1.</strain>
    </source>
</reference>
<name>CCOP_CERS4</name>
<protein>
    <recommendedName>
        <fullName evidence="16">Cbb3-type cytochrome c oxidase subunit CcoP</fullName>
        <shortName evidence="1">Cbb3-Cox subunit CcoP</shortName>
    </recommendedName>
    <alternativeName>
        <fullName evidence="3">C-type cytochrome CcoP</fullName>
        <shortName evidence="1">Cyt c(P)</shortName>
    </alternativeName>
    <alternativeName>
        <fullName evidence="1">Cytochrome c oxidase subunit III</fullName>
    </alternativeName>
</protein>
<evidence type="ECO:0000250" key="1">
    <source>
        <dbReference type="UniProtKB" id="D5ARP7"/>
    </source>
</evidence>
<evidence type="ECO:0000250" key="2">
    <source>
        <dbReference type="UniProtKB" id="D9IA45"/>
    </source>
</evidence>
<evidence type="ECO:0000250" key="3">
    <source>
        <dbReference type="UniProtKB" id="Q52689"/>
    </source>
</evidence>
<evidence type="ECO:0000250" key="4">
    <source>
        <dbReference type="UniProtKB" id="Q8KS19"/>
    </source>
</evidence>
<evidence type="ECO:0000255" key="5"/>
<evidence type="ECO:0000255" key="6">
    <source>
        <dbReference type="PROSITE-ProRule" id="PRU00433"/>
    </source>
</evidence>
<evidence type="ECO:0000256" key="7">
    <source>
        <dbReference type="SAM" id="MobiDB-lite"/>
    </source>
</evidence>
<evidence type="ECO:0000269" key="8">
    <source>
    </source>
</evidence>
<evidence type="ECO:0000269" key="9">
    <source>
    </source>
</evidence>
<evidence type="ECO:0000269" key="10">
    <source>
    </source>
</evidence>
<evidence type="ECO:0000269" key="11">
    <source>
    </source>
</evidence>
<evidence type="ECO:0000303" key="12">
    <source>
    </source>
</evidence>
<evidence type="ECO:0000305" key="13"/>
<evidence type="ECO:0000312" key="14">
    <source>
        <dbReference type="EMBL" id="AAB02559.1"/>
    </source>
</evidence>
<evidence type="ECO:0000312" key="15">
    <source>
        <dbReference type="EMBL" id="AAC44983.1"/>
    </source>
</evidence>
<evidence type="ECO:0000312" key="16">
    <source>
        <dbReference type="EMBL" id="ABA79869.1"/>
    </source>
</evidence>
<organism>
    <name type="scientific">Cereibacter sphaeroides (strain ATCC 17023 / DSM 158 / JCM 6121 / CCUG 31486 / LMG 2827 / NBRC 12203 / NCIMB 8253 / ATH 2.4.1.)</name>
    <name type="common">Rhodobacter sphaeroides</name>
    <dbReference type="NCBI Taxonomy" id="272943"/>
    <lineage>
        <taxon>Bacteria</taxon>
        <taxon>Pseudomonadati</taxon>
        <taxon>Pseudomonadota</taxon>
        <taxon>Alphaproteobacteria</taxon>
        <taxon>Rhodobacterales</taxon>
        <taxon>Paracoccaceae</taxon>
        <taxon>Cereibacter</taxon>
    </lineage>
</organism>
<accession>Q3J015</accession>
<accession>P72340</accession>
<accession>Q53114</accession>
<dbReference type="EMBL" id="U58092">
    <property type="protein sequence ID" value="AAB02559.1"/>
    <property type="molecule type" value="Genomic_DNA"/>
</dbReference>
<dbReference type="EMBL" id="CP000143">
    <property type="protein sequence ID" value="ABA79869.1"/>
    <property type="molecule type" value="Genomic_DNA"/>
</dbReference>
<dbReference type="EMBL" id="AF202779">
    <property type="protein sequence ID" value="AAC44983.1"/>
    <property type="molecule type" value="Genomic_DNA"/>
</dbReference>
<dbReference type="RefSeq" id="WP_011338422.1">
    <property type="nucleotide sequence ID" value="NC_007493.2"/>
</dbReference>
<dbReference type="RefSeq" id="YP_353770.1">
    <property type="nucleotide sequence ID" value="NC_007493.2"/>
</dbReference>
<dbReference type="SMR" id="Q3J015"/>
<dbReference type="STRING" id="272943.RSP_0693"/>
<dbReference type="EnsemblBacteria" id="ABA79869">
    <property type="protein sequence ID" value="ABA79869"/>
    <property type="gene ID" value="RSP_0693"/>
</dbReference>
<dbReference type="GeneID" id="3718343"/>
<dbReference type="KEGG" id="rsp:RSP_0693"/>
<dbReference type="PATRIC" id="fig|272943.9.peg.2645"/>
<dbReference type="eggNOG" id="COG2010">
    <property type="taxonomic scope" value="Bacteria"/>
</dbReference>
<dbReference type="OrthoDB" id="9811281at2"/>
<dbReference type="PhylomeDB" id="Q3J015"/>
<dbReference type="UniPathway" id="UPA00705"/>
<dbReference type="Proteomes" id="UP000002703">
    <property type="component" value="Chromosome 1"/>
</dbReference>
<dbReference type="GO" id="GO:0005886">
    <property type="term" value="C:plasma membrane"/>
    <property type="evidence" value="ECO:0007669"/>
    <property type="project" value="UniProtKB-SubCell"/>
</dbReference>
<dbReference type="GO" id="GO:0009055">
    <property type="term" value="F:electron transfer activity"/>
    <property type="evidence" value="ECO:0007669"/>
    <property type="project" value="InterPro"/>
</dbReference>
<dbReference type="GO" id="GO:0020037">
    <property type="term" value="F:heme binding"/>
    <property type="evidence" value="ECO:0007669"/>
    <property type="project" value="InterPro"/>
</dbReference>
<dbReference type="GO" id="GO:0005506">
    <property type="term" value="F:iron ion binding"/>
    <property type="evidence" value="ECO:0007669"/>
    <property type="project" value="InterPro"/>
</dbReference>
<dbReference type="GO" id="GO:0016491">
    <property type="term" value="F:oxidoreductase activity"/>
    <property type="evidence" value="ECO:0007669"/>
    <property type="project" value="UniProtKB-KW"/>
</dbReference>
<dbReference type="GO" id="GO:0006119">
    <property type="term" value="P:oxidative phosphorylation"/>
    <property type="evidence" value="ECO:0007669"/>
    <property type="project" value="UniProtKB-UniPathway"/>
</dbReference>
<dbReference type="GO" id="GO:1902600">
    <property type="term" value="P:proton transmembrane transport"/>
    <property type="evidence" value="ECO:0007669"/>
    <property type="project" value="UniProtKB-KW"/>
</dbReference>
<dbReference type="Gene3D" id="6.10.280.130">
    <property type="match status" value="1"/>
</dbReference>
<dbReference type="Gene3D" id="1.10.760.10">
    <property type="entry name" value="Cytochrome c-like domain"/>
    <property type="match status" value="2"/>
</dbReference>
<dbReference type="InterPro" id="IPR032858">
    <property type="entry name" value="CcoP_N"/>
</dbReference>
<dbReference type="InterPro" id="IPR038414">
    <property type="entry name" value="CcoP_N_sf"/>
</dbReference>
<dbReference type="InterPro" id="IPR009056">
    <property type="entry name" value="Cyt_c-like_dom"/>
</dbReference>
<dbReference type="InterPro" id="IPR036909">
    <property type="entry name" value="Cyt_c-like_dom_sf"/>
</dbReference>
<dbReference type="InterPro" id="IPR008168">
    <property type="entry name" value="Cyt_C_IC"/>
</dbReference>
<dbReference type="InterPro" id="IPR004678">
    <property type="entry name" value="Cyt_c_oxidase_cbb3_su3"/>
</dbReference>
<dbReference type="InterPro" id="IPR050597">
    <property type="entry name" value="Cytochrome_c_Oxidase_Subunit"/>
</dbReference>
<dbReference type="NCBIfam" id="TIGR00782">
    <property type="entry name" value="ccoP"/>
    <property type="match status" value="1"/>
</dbReference>
<dbReference type="PANTHER" id="PTHR33751">
    <property type="entry name" value="CBB3-TYPE CYTOCHROME C OXIDASE SUBUNIT FIXP"/>
    <property type="match status" value="1"/>
</dbReference>
<dbReference type="PANTHER" id="PTHR33751:SF1">
    <property type="entry name" value="CBB3-TYPE CYTOCHROME C OXIDASE SUBUNIT FIXP"/>
    <property type="match status" value="1"/>
</dbReference>
<dbReference type="Pfam" id="PF13442">
    <property type="entry name" value="Cytochrome_CBB3"/>
    <property type="match status" value="2"/>
</dbReference>
<dbReference type="Pfam" id="PF14715">
    <property type="entry name" value="FixP_N"/>
    <property type="match status" value="1"/>
</dbReference>
<dbReference type="PIRSF" id="PIRSF000006">
    <property type="entry name" value="Cbb3-Cox_fixP"/>
    <property type="match status" value="1"/>
</dbReference>
<dbReference type="PRINTS" id="PR00605">
    <property type="entry name" value="CYTCHROMECIC"/>
</dbReference>
<dbReference type="SUPFAM" id="SSF46626">
    <property type="entry name" value="Cytochrome c"/>
    <property type="match status" value="2"/>
</dbReference>
<dbReference type="PROSITE" id="PS51007">
    <property type="entry name" value="CYTC"/>
    <property type="match status" value="2"/>
</dbReference>
<proteinExistence type="evidence at protein level"/>
<keyword id="KW-0997">Cell inner membrane</keyword>
<keyword id="KW-1003">Cell membrane</keyword>
<keyword id="KW-0249">Electron transport</keyword>
<keyword id="KW-0349">Heme</keyword>
<keyword id="KW-0375">Hydrogen ion transport</keyword>
<keyword id="KW-0406">Ion transport</keyword>
<keyword id="KW-0408">Iron</keyword>
<keyword id="KW-0472">Membrane</keyword>
<keyword id="KW-0479">Metal-binding</keyword>
<keyword id="KW-0560">Oxidoreductase</keyword>
<keyword id="KW-1185">Reference proteome</keyword>
<keyword id="KW-0677">Repeat</keyword>
<keyword id="KW-0679">Respiratory chain</keyword>
<keyword id="KW-0812">Transmembrane</keyword>
<keyword id="KW-1133">Transmembrane helix</keyword>
<keyword id="KW-0813">Transport</keyword>
<comment type="function">
    <text evidence="1 2 9 11">C-type cytochrome. Part of the cbb3-type cytochrome c oxidase complex. CcoP subunit is required for transferring electrons from donor cytochrome c via its heme groups to CcoO subunit. From there, electrons are shuttled to the catalytic binuclear center of CcoN subunit where oxygen reduction takes place. The complex also functions as a proton pump.</text>
</comment>
<comment type="cofactor">
    <cofactor evidence="2 9">
        <name>heme c</name>
        <dbReference type="ChEBI" id="CHEBI:61717"/>
    </cofactor>
    <text evidence="2 9">Binds 2 heme C groups per subunit.</text>
</comment>
<comment type="pathway">
    <text evidence="1">Energy metabolism; oxidative phosphorylation.</text>
</comment>
<comment type="subunit">
    <text evidence="1 9">Component of the cbb3-type cytochrome c oxidase at least composed of CcoN, CcoO, CcoQ and CcoP.</text>
</comment>
<comment type="subcellular location">
    <subcellularLocation>
        <location evidence="11">Cell inner membrane</location>
        <topology evidence="4 5 11">Single-pass membrane protein</topology>
    </subcellularLocation>
</comment>
<comment type="disruption phenotype">
    <text evidence="8 10">Single ccoP mutant as well as ccoP rdxB double mutant give rise to colonies with very deep red pigmentation compared to wild-type when grown on SIS agar plates in the presence of O(2). The same mutants don't have cytochrome c oxidase activity and they accumulate high levels of a yellow carotenoid spheroidenone (SO) during anoxygenic photosynthetic and diazotrophic growth. Expression of crtA in the ccoP rdxB double mutant is approximately 60% higher than that observed for wild-type. Disruption of crtA together with ccoP and rdxB mutants prevent the accumulation of SO. CcoP and rdxB mutants, either singly or in combination, are found to synthesize photosynthetic complexes compared with wild-type when grown in the presence of 30% oxygen. They show a greater than 10-fold increase in levels of transcription of genes encoding photosynthetic light-harvesting complexes compared to the levels with wild-type. CcoP single mutant shows increased levels of photopigments bacteriochlorophyll and carotenoid under aerobic conditions. It produces more light-harvesting complexes and photopigments under photosynthetic conditions than under anaerobic dark conditions. It has no cytochrome c oxidase activity under anaerobic dark conditions. Addition of dimethyl sulfoxide (DMSO) to photosynthetic cultures of the ccoP mutant leads to decreased levels of photosynthetic light-harvesting complexes.</text>
</comment>
<comment type="similarity">
    <text evidence="13">Belongs to the CcoP / FixP family.</text>
</comment>